<sequence>MGCLGNQLLIALLLVSVLEICCVQYVTVFYGVPAWKNATIPLFCATKNRDTWGTTQCLPDNDDYSELAINVTEAFDAWDNTVTEQAIEDVWNLFETSIKPCVKLTPLCIAMRCNKTETDRWGLTGNAGTTTTAITTTATPSVAENVINESNPCIKNNSCAGLEQEPMIGCKFNMTGLNRDKKKEYNETWYSRDLICEQSANESESKCYMHHCNTSVIQESCDKHYWDAIRFRYCAPPGYALLRCNDSNYLGFAPNCSKVVVSSCTRMMETQTSTWFGFNGTRAENRTYIYWHGKSNRTIISLNKYYNLTMRCRRPENKTVLPVTIMSGLVFHSQPINERPKQAWCWFEGSWKKAIQEVKETLVKHPRYTGTNDTRKINLTAPAGGDPEVTFMWTNCRGEFLYCKMNWFLNWVEDRDQKGGRWKQQNRKEQQKKNYVPCHIRQIINTWHKVGKNVYLPPREGDLTCNSTVTSLIAEIDWINSNETNITMSAEVAELYRLELGDYKLIEITPIGLAPTSVRRYTTTGASRNKRGVFVLGFLGFLATAGSAMGAASVTLSAQSRTLLAGIVQQQQQLLDVVKRQQELLRLTVWGTKNLQTRVTAIEKYLKDQAQLNSWGCAFRQVCHTTVPWPNETLVPNWNNMTWQEWERQVDFLEANITQLLEEAQIQQEKNMYELQKLNSWDIFGNWFDLTSWIRYIQYGVLIVLGVIGLRIVIYVVQMLARLRQGYRPVFSSPPAYVQQIPIHKGQEPPTKEGEEGDGGDRGGSRSWPWQIEYIHFLIRQLIRLLTWLFSSCRDWLLRSYQILQPVLQSLSTTLQRVREVIRIEIAYLQYGWRYFQEAVQAWWKLARETLASAWGDIWETLGRVGRGILAIPRRIRQGLELTLL</sequence>
<protein>
    <recommendedName>
        <fullName>Envelope glycoprotein gp160</fullName>
    </recommendedName>
    <alternativeName>
        <fullName>Env polyprotein</fullName>
    </alternativeName>
    <component>
        <recommendedName>
            <fullName>Surface protein gp120</fullName>
            <shortName>SU</shortName>
        </recommendedName>
        <alternativeName>
            <fullName>Glycoprotein 120</fullName>
            <shortName>gp120</shortName>
        </alternativeName>
    </component>
    <component>
        <recommendedName>
            <fullName>Transmembrane protein gp41</fullName>
            <shortName>TM</shortName>
        </recommendedName>
        <alternativeName>
            <fullName>Glycoprotein 32</fullName>
            <shortName>gp32</shortName>
        </alternativeName>
    </component>
</protein>
<gene>
    <name type="primary">env</name>
</gene>
<comment type="function">
    <text evidence="1">The surface protein gp120 (SU) attaches the virus to the host lymphoid cell by binding to the primary receptor CD4. This interaction induces a structural rearrangement creating a high affinity binding site for a chemokine coreceptor like CCR5. This peculiar 2 stage receptor-interaction strategy allows gp120 to maintain the highly conserved coreceptor-binding site in a cryptic conformation, protected from neutralizing antibodies. These changes are transmitted to the transmembrane protein gp41 and are thought to activate its fusogenic potential by unmasking its fusion peptide (By similarity).</text>
</comment>
<comment type="function">
    <text evidence="1">Surface protein gp120 (SU) may target the virus to gut-associated lymphoid tissue (GALT) by binding host ITGA4/ITGB7 (alpha-4/beta-7 integrins), a complex that mediates T-cell migration to the GALT. Interaction between gp120 and ITGA4/ITGB7 would allow the virus to enter GALT early in the infection, infecting and killing most of GALT's resting CD4+ T-cells. This T-cell depletion is believed to be the major insult to the host immune system leading to AIDS (By similarity).</text>
</comment>
<comment type="function">
    <text evidence="1">The surface protein gp120 is a ligand for CD209/DC-SIGN and CLEC4M/DC-SIGNR, which are respectively found on dendritic cells (DCs), and on endothelial cells of liver sinusoids and lymph node sinuses. These interactions allow capture of viral particles at mucosal surfaces by these cells and subsequent transmission to permissive cells. DCs are professional antigen presenting cells, critical for host immunity by inducing specific immune responses against a broad variety of pathogens. They act as sentinels in various tissues where they take up antigen, process it, and present it to T-cells following migration to lymphoid organs. SIV subverts the migration properties of dendritic cells to gain access to CD4+ T-cells in lymph nodes. Virus transmission to permissive T-cells occurs either in trans (without DCs infection, through viral capture and transmission), or in cis (following DCs productive infection, through the usual CD4-gp120 interaction), thereby inducing a robust infection. In trans infection, bound virions remain infectious over days and it is proposed that they are not degraded, but protected in non-lysosomal acidic organelles within the DCs close to the cell membrane thus contributing to the viral infectious potential during DCs' migration from the periphery to the lymphoid tissues. On arrival at lymphoid tissues, intact virions recycle back to DCs' cell surface allowing virus transmission to CD4+ T-cells. Virion capture also seems to lead to MHC-II-restricted viral antigen presentation, and probably to the activation of SIV-specific CD4+ cells (By similarity).</text>
</comment>
<comment type="function">
    <text evidence="1">The transmembrane protein gp41 (TM) acts as a class I viral fusion protein. Under the current model, the protein has at least 3 conformational states: pre-fusion native state, pre-hairpin intermediate state, and post-fusion hairpin state. During fusion of viral and target intracellular membranes, the coiled coil regions (heptad repeats) assume a trimer-of-hairpins structure, positioning the fusion peptide in close proximity to the C-terminal region of the ectodomain. The formation of this structure appears to drive apposition and subsequent fusion of viral and target cell membranes. Complete fusion occurs in host cell endosomes. The virus undergoes clathrin-dependent internalization long before endosomal fusion, thus minimizing the surface exposure of conserved viral epitopes during fusion and reducing the efficacy of inhibitors targeting these epitopes. Membranes fusion leads to delivery of the nucleocapsid into the cytoplasm (By similarity).</text>
</comment>
<comment type="function">
    <text evidence="1">The envelope glycoprotein gp160 precursor down-modulates cell surface CD4 antigen by interacting with it in the endoplasmic reticulum and blocking its transport to the cell surface.</text>
</comment>
<comment type="function">
    <text evidence="1">The gp120-gp41 heterodimer allows rapid transcytosis of the virus through CD4 negative cells such as simple epithelial monolayers of the intestinal, rectal and endocervical epithelial barriers. Both gp120 and gp41 specifically recognize glycosphingolipids galactosyl-ceramide (GalCer) or 3' sulfo-galactosyl-ceramide (GalS) present in the lipid rafts structures of epithelial cells. Binding to these alternative receptors allows the rapid transcytosis of the virus through the epithelial cells. This transcytotic vesicle-mediated transport of virions from the apical side to the basolateral side of the epithelial cells does not involve infection of the cells themselves (By similarity).</text>
</comment>
<comment type="subunit">
    <molecule>Surface protein gp120</molecule>
    <text evidence="1">The mature envelope protein (Env) consists of a homotrimer of non-covalently associated gp120-gp41 heterodimers. The resulting complex protrudes from the virus surface as a spike. Interacts with host CD4 and CCR5 (By similarity). Gp120 also interacts with the C-type lectins CD209/DC-SIGN and CLEC4M/DC-SIGNR (collectively referred to as DC-SIGN(R)).</text>
</comment>
<comment type="subunit">
    <molecule>Transmembrane protein gp41</molecule>
    <text evidence="1">The mature envelope protein (Env) consists of a homotrimer of non-covalently associated gp120-gp41 heterodimers. The resulting complex protrudes from the virus surface as a spike.</text>
</comment>
<comment type="subcellular location">
    <molecule>Transmembrane protein gp41</molecule>
    <subcellularLocation>
        <location evidence="1">Virion membrane</location>
        <topology evidence="1">Single-pass type I membrane protein</topology>
    </subcellularLocation>
    <subcellularLocation>
        <location evidence="1">Host cell membrane</location>
        <topology evidence="1">Single-pass type I membrane protein</topology>
    </subcellularLocation>
    <subcellularLocation>
        <location evidence="4">Host endosome membrane</location>
        <topology evidence="4">Single-pass type I membrane protein</topology>
    </subcellularLocation>
    <text evidence="1">It is probably concentrated at the site of budding and incorporated into the virions possibly by contacts between the cytoplasmic tail of Env and the N-terminus of Gag.</text>
</comment>
<comment type="subcellular location">
    <molecule>Surface protein gp120</molecule>
    <subcellularLocation>
        <location evidence="1">Virion membrane</location>
        <topology evidence="1">Peripheral membrane protein</topology>
    </subcellularLocation>
    <subcellularLocation>
        <location evidence="1">Host cell membrane</location>
        <topology evidence="1">Peripheral membrane protein</topology>
    </subcellularLocation>
    <subcellularLocation>
        <location evidence="4">Host endosome membrane</location>
        <topology evidence="4">Peripheral membrane protein</topology>
    </subcellularLocation>
    <text evidence="1">The surface protein is not anchored to the viral envelope, but associates with the extravirion surface through its binding to TM. It is probably concentrated at the site of budding and incorporated into the virions possibly by contacts between the cytoplasmic tail of Env and the N-terminus of Gag (By similarity).</text>
</comment>
<comment type="domain">
    <text evidence="1">Some of the most genetically diverse regions of the viral genome are present in Env. They are called variable regions 1 through 5 (V1 through V5) (By similarity).</text>
</comment>
<comment type="domain">
    <text evidence="1">The 17 amino acids long immunosuppressive region is present in many retroviral envelope proteins. Synthetic peptides derived from this relatively conserved sequence inhibit immune function in vitro and in vivo (By similarity).</text>
</comment>
<comment type="PTM">
    <text evidence="1">Specific enzymatic cleavages in vivo yield mature proteins. Envelope glycoproteins are synthesized as an inactive precursor that is heavily N-glycosylated and processed likely by host cell furin in the Golgi to yield the mature SU and TM proteins. The cleavage site between SU and TM requires the minimal sequence [KR]-X-[KR]-R (By similarity).</text>
</comment>
<comment type="PTM">
    <text evidence="1">Palmitoylation of the transmembrane protein and of Env polyprotein (prior to its proteolytic cleavage) is essential for their association with host cell membrane lipid rafts. Palmitoylation is therefore required for envelope trafficking to classical lipid rafts, but not for viral replication (By similarity).</text>
</comment>
<organismHost>
    <name type="scientific">Cercopithecidae</name>
    <name type="common">Old World monkeys</name>
    <dbReference type="NCBI Taxonomy" id="9527"/>
</organismHost>
<organism>
    <name type="scientific">Simian immunodeficiency virus (isolate F236/smH4)</name>
    <name type="common">SIV-sm</name>
    <name type="synonym">Simian immunodeficiency virus sooty mangabey monkey</name>
    <dbReference type="NCBI Taxonomy" id="11737"/>
    <lineage>
        <taxon>Viruses</taxon>
        <taxon>Riboviria</taxon>
        <taxon>Pararnavirae</taxon>
        <taxon>Artverviricota</taxon>
        <taxon>Revtraviricetes</taxon>
        <taxon>Ortervirales</taxon>
        <taxon>Retroviridae</taxon>
        <taxon>Orthoretrovirinae</taxon>
        <taxon>Lentivirus</taxon>
        <taxon>Simian immunodeficiency virus</taxon>
    </lineage>
</organism>
<name>ENV_SIVS4</name>
<reference key="1">
    <citation type="journal article" date="1989" name="Nature">
        <title>An African primate lentivirus (SIVsm) closely related to HIV-2.</title>
        <authorList>
            <person name="Hirsch V.M."/>
            <person name="Olmstead R.A."/>
            <person name="Murphey-Corb M."/>
            <person name="Purcell R.H."/>
            <person name="Johnson P.R."/>
        </authorList>
    </citation>
    <scope>NUCLEOTIDE SEQUENCE [GENOMIC DNA]</scope>
</reference>
<dbReference type="EMBL" id="X14307">
    <property type="protein sequence ID" value="CAA32487.1"/>
    <property type="molecule type" value="Genomic_DNA"/>
</dbReference>
<dbReference type="PIR" id="S04322">
    <property type="entry name" value="S04322"/>
</dbReference>
<dbReference type="PDB" id="2SIV">
    <property type="method" value="X-ray"/>
    <property type="resolution" value="2.20 A"/>
    <property type="chains" value="A/B/C/D/E/F=-"/>
</dbReference>
<dbReference type="PDBsum" id="2SIV"/>
<dbReference type="SMR" id="P12492"/>
<dbReference type="GlyCosmos" id="P12492">
    <property type="glycosylation" value="24 sites, No reported glycans"/>
</dbReference>
<dbReference type="Proteomes" id="UP000008173">
    <property type="component" value="Segment"/>
</dbReference>
<dbReference type="GO" id="GO:0044175">
    <property type="term" value="C:host cell endosome membrane"/>
    <property type="evidence" value="ECO:0007669"/>
    <property type="project" value="UniProtKB-SubCell"/>
</dbReference>
<dbReference type="GO" id="GO:0020002">
    <property type="term" value="C:host cell plasma membrane"/>
    <property type="evidence" value="ECO:0007669"/>
    <property type="project" value="UniProtKB-SubCell"/>
</dbReference>
<dbReference type="GO" id="GO:0016020">
    <property type="term" value="C:membrane"/>
    <property type="evidence" value="ECO:0007669"/>
    <property type="project" value="UniProtKB-KW"/>
</dbReference>
<dbReference type="GO" id="GO:0019031">
    <property type="term" value="C:viral envelope"/>
    <property type="evidence" value="ECO:0007669"/>
    <property type="project" value="UniProtKB-KW"/>
</dbReference>
<dbReference type="GO" id="GO:0055036">
    <property type="term" value="C:virion membrane"/>
    <property type="evidence" value="ECO:0007669"/>
    <property type="project" value="UniProtKB-SubCell"/>
</dbReference>
<dbReference type="GO" id="GO:0005198">
    <property type="term" value="F:structural molecule activity"/>
    <property type="evidence" value="ECO:0007669"/>
    <property type="project" value="InterPro"/>
</dbReference>
<dbReference type="GO" id="GO:0039663">
    <property type="term" value="P:membrane fusion involved in viral entry into host cell"/>
    <property type="evidence" value="ECO:0007669"/>
    <property type="project" value="UniProtKB-KW"/>
</dbReference>
<dbReference type="GO" id="GO:0046718">
    <property type="term" value="P:symbiont entry into host cell"/>
    <property type="evidence" value="ECO:0007669"/>
    <property type="project" value="UniProtKB-KW"/>
</dbReference>
<dbReference type="GO" id="GO:0019062">
    <property type="term" value="P:virion attachment to host cell"/>
    <property type="evidence" value="ECO:0007669"/>
    <property type="project" value="UniProtKB-KW"/>
</dbReference>
<dbReference type="CDD" id="cd09909">
    <property type="entry name" value="HIV-1-like_HR1-HR2"/>
    <property type="match status" value="1"/>
</dbReference>
<dbReference type="Gene3D" id="1.10.287.210">
    <property type="match status" value="1"/>
</dbReference>
<dbReference type="Gene3D" id="2.170.40.20">
    <property type="entry name" value="Human immunodeficiency virus 1, Gp160, envelope glycoprotein"/>
    <property type="match status" value="2"/>
</dbReference>
<dbReference type="InterPro" id="IPR036377">
    <property type="entry name" value="Gp120_core_sf"/>
</dbReference>
<dbReference type="InterPro" id="IPR000328">
    <property type="entry name" value="GP41-like"/>
</dbReference>
<dbReference type="InterPro" id="IPR000777">
    <property type="entry name" value="HIV1_Gp120"/>
</dbReference>
<dbReference type="Pfam" id="PF00516">
    <property type="entry name" value="GP120"/>
    <property type="match status" value="1"/>
</dbReference>
<dbReference type="Pfam" id="PF00517">
    <property type="entry name" value="GP41"/>
    <property type="match status" value="1"/>
</dbReference>
<dbReference type="SUPFAM" id="SSF56502">
    <property type="entry name" value="gp120 core"/>
    <property type="match status" value="1"/>
</dbReference>
<dbReference type="SUPFAM" id="SSF58069">
    <property type="entry name" value="Virus ectodomain"/>
    <property type="match status" value="1"/>
</dbReference>
<evidence type="ECO:0000250" key="1"/>
<evidence type="ECO:0000255" key="2"/>
<evidence type="ECO:0000256" key="3">
    <source>
        <dbReference type="SAM" id="MobiDB-lite"/>
    </source>
</evidence>
<evidence type="ECO:0000305" key="4"/>
<keyword id="KW-0002">3D-structure</keyword>
<keyword id="KW-0053">Apoptosis</keyword>
<keyword id="KW-0165">Cleavage on pair of basic residues</keyword>
<keyword id="KW-0175">Coiled coil</keyword>
<keyword id="KW-1015">Disulfide bond</keyword>
<keyword id="KW-1168">Fusion of virus membrane with host membrane</keyword>
<keyword id="KW-0325">Glycoprotein</keyword>
<keyword id="KW-1032">Host cell membrane</keyword>
<keyword id="KW-1039">Host endosome</keyword>
<keyword id="KW-1043">Host membrane</keyword>
<keyword id="KW-0945">Host-virus interaction</keyword>
<keyword id="KW-0449">Lipoprotein</keyword>
<keyword id="KW-0472">Membrane</keyword>
<keyword id="KW-0564">Palmitate</keyword>
<keyword id="KW-0732">Signal</keyword>
<keyword id="KW-0812">Transmembrane</keyword>
<keyword id="KW-1133">Transmembrane helix</keyword>
<keyword id="KW-1161">Viral attachment to host cell</keyword>
<keyword id="KW-0261">Viral envelope protein</keyword>
<keyword id="KW-1162">Viral penetration into host cytoplasm</keyword>
<keyword id="KW-0946">Virion</keyword>
<keyword id="KW-1160">Virus entry into host cell</keyword>
<feature type="signal peptide" evidence="2">
    <location>
        <begin position="1"/>
        <end position="23"/>
    </location>
</feature>
<feature type="chain" id="PRO_0000085305" description="Envelope glycoprotein gp160">
    <location>
        <begin position="24"/>
        <end position="885"/>
    </location>
</feature>
<feature type="chain" id="PRO_0000239515" description="Surface protein gp120" evidence="1">
    <location>
        <begin position="24"/>
        <end position="531"/>
    </location>
</feature>
<feature type="chain" id="PRO_0000239516" description="Transmembrane protein gp41" evidence="1">
    <location>
        <begin position="532"/>
        <end position="885"/>
    </location>
</feature>
<feature type="topological domain" description="Extracellular" evidence="2">
    <location>
        <begin position="24"/>
        <end position="700"/>
    </location>
</feature>
<feature type="transmembrane region" description="Helical" evidence="2">
    <location>
        <begin position="701"/>
        <end position="721"/>
    </location>
</feature>
<feature type="topological domain" description="Cytoplasmic" evidence="2">
    <location>
        <begin position="722"/>
        <end position="885"/>
    </location>
</feature>
<feature type="region of interest" description="V1">
    <location>
        <begin position="113"/>
        <end position="169"/>
    </location>
</feature>
<feature type="region of interest" description="V2">
    <location>
        <begin position="170"/>
        <end position="212"/>
    </location>
</feature>
<feature type="region of interest" description="V3">
    <location>
        <begin position="312"/>
        <end position="344"/>
    </location>
</feature>
<feature type="region of interest" description="V4">
    <location>
        <begin position="403"/>
        <end position="438"/>
    </location>
</feature>
<feature type="region of interest" description="V5">
    <location>
        <begin position="481"/>
        <end position="488"/>
    </location>
</feature>
<feature type="region of interest" description="Fusion peptide" evidence="2">
    <location>
        <begin position="532"/>
        <end position="552"/>
    </location>
</feature>
<feature type="region of interest" description="Immunosuppression" evidence="1">
    <location>
        <begin position="595"/>
        <end position="611"/>
    </location>
</feature>
<feature type="region of interest" description="MPER; binding to GalCer" evidence="1">
    <location>
        <begin position="677"/>
        <end position="698"/>
    </location>
</feature>
<feature type="region of interest" description="Disordered" evidence="3">
    <location>
        <begin position="743"/>
        <end position="764"/>
    </location>
</feature>
<feature type="coiled-coil region" evidence="2">
    <location>
        <begin position="640"/>
        <end position="672"/>
    </location>
</feature>
<feature type="short sequence motif" description="YXXV motif; contains endocytosis signal" evidence="1">
    <location>
        <begin position="727"/>
        <end position="730"/>
    </location>
</feature>
<feature type="short sequence motif" description="Di-leucine internalization motif" evidence="1">
    <location>
        <begin position="884"/>
        <end position="885"/>
    </location>
</feature>
<feature type="compositionally biased region" description="Basic and acidic residues" evidence="3">
    <location>
        <begin position="745"/>
        <end position="764"/>
    </location>
</feature>
<feature type="site" description="Cleavage; by host furin" evidence="2">
    <location>
        <begin position="531"/>
        <end position="532"/>
    </location>
</feature>
<feature type="lipid moiety-binding region" description="S-palmitoyl cysteine; by host" evidence="1">
    <location>
        <position position="793"/>
    </location>
</feature>
<feature type="glycosylation site" description="N-linked (GlcNAc...) asparagine; by host" evidence="2">
    <location>
        <position position="37"/>
    </location>
</feature>
<feature type="glycosylation site" description="N-linked (GlcNAc...) asparagine; by host" evidence="2">
    <location>
        <position position="70"/>
    </location>
</feature>
<feature type="glycosylation site" description="N-linked (GlcNAc...) asparagine; by host" evidence="2">
    <location>
        <position position="114"/>
    </location>
</feature>
<feature type="glycosylation site" description="N-linked (GlcNAc...) asparagine; by host" evidence="2">
    <location>
        <position position="148"/>
    </location>
</feature>
<feature type="glycosylation site" description="N-linked (GlcNAc...) asparagine; by host" evidence="2">
    <location>
        <position position="156"/>
    </location>
</feature>
<feature type="glycosylation site" description="N-linked (GlcNAc...) asparagine; by host" evidence="2">
    <location>
        <position position="173"/>
    </location>
</feature>
<feature type="glycosylation site" description="N-linked (GlcNAc...) asparagine; by host" evidence="2">
    <location>
        <position position="186"/>
    </location>
</feature>
<feature type="glycosylation site" description="N-linked (GlcNAc...) asparagine; by host" evidence="2">
    <location>
        <position position="201"/>
    </location>
</feature>
<feature type="glycosylation site" description="N-linked (GlcNAc...) asparagine; by host" evidence="2">
    <location>
        <position position="213"/>
    </location>
</feature>
<feature type="glycosylation site" description="N-linked (GlcNAc...) asparagine; by host" evidence="2">
    <location>
        <position position="245"/>
    </location>
</feature>
<feature type="glycosylation site" description="N-linked (GlcNAc...) asparagine; by host" evidence="2">
    <location>
        <position position="255"/>
    </location>
</feature>
<feature type="glycosylation site" description="N-linked (GlcNAc...) asparagine; by host" evidence="2">
    <location>
        <position position="279"/>
    </location>
</feature>
<feature type="glycosylation site" description="N-linked (GlcNAc...) asparagine; by host" evidence="2">
    <location>
        <position position="285"/>
    </location>
</feature>
<feature type="glycosylation site" description="N-linked (GlcNAc...) asparagine; by host" evidence="2">
    <location>
        <position position="296"/>
    </location>
</feature>
<feature type="glycosylation site" description="N-linked (GlcNAc...) asparagine; by host" evidence="2">
    <location>
        <position position="307"/>
    </location>
</feature>
<feature type="glycosylation site" description="N-linked (GlcNAc...) asparagine; by host" evidence="2">
    <location>
        <position position="317"/>
    </location>
</feature>
<feature type="glycosylation site" description="N-linked (GlcNAc...) asparagine; by host" evidence="2">
    <location>
        <position position="372"/>
    </location>
</feature>
<feature type="glycosylation site" description="N-linked (GlcNAc...) asparagine; by host" evidence="2">
    <location>
        <position position="378"/>
    </location>
</feature>
<feature type="glycosylation site" description="N-linked (GlcNAc...) asparagine; by host" evidence="2">
    <location>
        <position position="466"/>
    </location>
</feature>
<feature type="glycosylation site" description="N-linked (GlcNAc...) asparagine; by host" evidence="2">
    <location>
        <position position="482"/>
    </location>
</feature>
<feature type="glycosylation site" description="N-linked (GlcNAc...) asparagine; by host" evidence="2">
    <location>
        <position position="485"/>
    </location>
</feature>
<feature type="glycosylation site" description="N-linked (GlcNAc...) asparagine; by host" evidence="2">
    <location>
        <position position="631"/>
    </location>
</feature>
<feature type="glycosylation site" description="N-linked (GlcNAc...) asparagine; by host" evidence="2">
    <location>
        <position position="640"/>
    </location>
</feature>
<feature type="glycosylation site" description="N-linked (GlcNAc...) asparagine; by host" evidence="2">
    <location>
        <position position="656"/>
    </location>
</feature>
<feature type="disulfide bond" evidence="1">
    <location>
        <begin position="44"/>
        <end position="57"/>
    </location>
</feature>
<feature type="disulfide bond" evidence="1">
    <location>
        <begin position="101"/>
        <end position="221"/>
    </location>
</feature>
<feature type="disulfide bond" evidence="1">
    <location>
        <begin position="108"/>
        <end position="212"/>
    </location>
</feature>
<feature type="disulfide bond" evidence="1">
    <location>
        <begin position="113"/>
        <end position="170"/>
    </location>
</feature>
<feature type="disulfide bond" evidence="1">
    <location>
        <begin position="234"/>
        <end position="264"/>
    </location>
</feature>
<feature type="disulfide bond" evidence="1">
    <location>
        <begin position="244"/>
        <end position="256"/>
    </location>
</feature>
<feature type="disulfide bond" evidence="1">
    <location>
        <begin position="312"/>
        <end position="345"/>
    </location>
</feature>
<feature type="disulfide bond" evidence="1">
    <location>
        <begin position="396"/>
        <end position="465"/>
    </location>
</feature>
<feature type="disulfide bond" evidence="1">
    <location>
        <begin position="403"/>
        <end position="438"/>
    </location>
</feature>
<accession>P12492</accession>
<proteinExistence type="evidence at protein level"/>